<organism>
    <name type="scientific">Xanthomonas oryzae pv. oryzae (strain MAFF 311018)</name>
    <dbReference type="NCBI Taxonomy" id="342109"/>
    <lineage>
        <taxon>Bacteria</taxon>
        <taxon>Pseudomonadati</taxon>
        <taxon>Pseudomonadota</taxon>
        <taxon>Gammaproteobacteria</taxon>
        <taxon>Lysobacterales</taxon>
        <taxon>Lysobacteraceae</taxon>
        <taxon>Xanthomonas</taxon>
    </lineage>
</organism>
<keyword id="KW-0143">Chaperone</keyword>
<keyword id="KW-0413">Isomerase</keyword>
<keyword id="KW-0574">Periplasm</keyword>
<keyword id="KW-0677">Repeat</keyword>
<keyword id="KW-0697">Rotamase</keyword>
<keyword id="KW-0732">Signal</keyword>
<accession>Q2NZI6</accession>
<sequence>MTKPFSVVLASLLAITSTISPLASAQQSQPLDRIAAIVDEDVVLQSELDRAVRNVKSQYAGRENQLPPDDVLQRQVLERLILVKLQVGRADGSGIRVSDEELNRAIASIAQQNGTTVDGLRQKLAADGMGYADFRASVRDEIIVQRLRQSFAQSRISVSEGEVDTALTQQAATGSKYHLAHILIGLPEGATAEQIATGQKKVDGVKTLIDKGELDFPAAAVRYSDSPNALEGGDLGWRSLDEIPNAFAQLIRDMKPGQVAGPLRGPSGFQLLKLMEMRDANAGGEKKMVTEYNARHILVRVGDNQTEAQAKAKIDTIRARIVGGADFQATAKESSEDTNSRGQGGDLGWFPADAFGPDFGKQVEGLADGAVSEPFRTQAGWHIVQRVGSRQTDVSAENQRAQVRETIGRRKLEEEYNRYLQELRGEAYVSYRTGDRADNNATAAPAKSADPALPAPPPAKPTR</sequence>
<protein>
    <recommendedName>
        <fullName evidence="1">Chaperone SurA</fullName>
    </recommendedName>
    <alternativeName>
        <fullName evidence="1">Peptidyl-prolyl cis-trans isomerase SurA</fullName>
        <shortName evidence="1">PPIase SurA</shortName>
        <ecNumber evidence="1">5.2.1.8</ecNumber>
    </alternativeName>
    <alternativeName>
        <fullName evidence="1">Rotamase SurA</fullName>
    </alternativeName>
</protein>
<reference key="1">
    <citation type="journal article" date="2005" name="Jpn. Agric. Res. Q.">
        <title>Genome sequence of Xanthomonas oryzae pv. oryzae suggests contribution of large numbers of effector genes and insertion sequences to its race diversity.</title>
        <authorList>
            <person name="Ochiai H."/>
            <person name="Inoue Y."/>
            <person name="Takeya M."/>
            <person name="Sasaki A."/>
            <person name="Kaku H."/>
        </authorList>
    </citation>
    <scope>NUCLEOTIDE SEQUENCE [LARGE SCALE GENOMIC DNA]</scope>
    <source>
        <strain>MAFF 311018</strain>
    </source>
</reference>
<comment type="function">
    <text evidence="1">Chaperone involved in the correct folding and assembly of outer membrane proteins. Recognizes specific patterns of aromatic residues and the orientation of their side chains, which are found more frequently in integral outer membrane proteins. May act in both early periplasmic and late outer membrane-associated steps of protein maturation.</text>
</comment>
<comment type="catalytic activity">
    <reaction evidence="1">
        <text>[protein]-peptidylproline (omega=180) = [protein]-peptidylproline (omega=0)</text>
        <dbReference type="Rhea" id="RHEA:16237"/>
        <dbReference type="Rhea" id="RHEA-COMP:10747"/>
        <dbReference type="Rhea" id="RHEA-COMP:10748"/>
        <dbReference type="ChEBI" id="CHEBI:83833"/>
        <dbReference type="ChEBI" id="CHEBI:83834"/>
        <dbReference type="EC" id="5.2.1.8"/>
    </reaction>
</comment>
<comment type="subcellular location">
    <subcellularLocation>
        <location evidence="1">Periplasm</location>
    </subcellularLocation>
    <text evidence="1">Is capable of associating with the outer membrane.</text>
</comment>
<comment type="domain">
    <text evidence="1">The PPIase activity resides only in the second parvulin domain. The N-terminal region and the C-terminal tail are necessary and sufficient for the chaperone activity of SurA. The PPIase activity is dispensable for SurA to function as a chaperone. The N-terminal region and the C-terminal tail are also required for porin recognition.</text>
</comment>
<evidence type="ECO:0000255" key="1">
    <source>
        <dbReference type="HAMAP-Rule" id="MF_01183"/>
    </source>
</evidence>
<evidence type="ECO:0000256" key="2">
    <source>
        <dbReference type="SAM" id="MobiDB-lite"/>
    </source>
</evidence>
<feature type="signal peptide" evidence="1">
    <location>
        <begin position="1"/>
        <end position="25"/>
    </location>
</feature>
<feature type="chain" id="PRO_0000270052" description="Chaperone SurA">
    <location>
        <begin position="26"/>
        <end position="463"/>
    </location>
</feature>
<feature type="domain" description="PpiC 1" evidence="1">
    <location>
        <begin position="174"/>
        <end position="276"/>
    </location>
</feature>
<feature type="domain" description="PpiC 2" evidence="1">
    <location>
        <begin position="289"/>
        <end position="388"/>
    </location>
</feature>
<feature type="region of interest" description="Disordered" evidence="2">
    <location>
        <begin position="329"/>
        <end position="348"/>
    </location>
</feature>
<feature type="region of interest" description="Disordered" evidence="2">
    <location>
        <begin position="434"/>
        <end position="463"/>
    </location>
</feature>
<feature type="compositionally biased region" description="Low complexity" evidence="2">
    <location>
        <begin position="439"/>
        <end position="452"/>
    </location>
</feature>
<feature type="compositionally biased region" description="Pro residues" evidence="2">
    <location>
        <begin position="453"/>
        <end position="463"/>
    </location>
</feature>
<gene>
    <name evidence="1" type="primary">surA</name>
    <name type="ordered locus">XOO3536</name>
</gene>
<name>SURA_XANOM</name>
<dbReference type="EC" id="5.2.1.8" evidence="1"/>
<dbReference type="EMBL" id="AP008229">
    <property type="protein sequence ID" value="BAE70291.1"/>
    <property type="molecule type" value="Genomic_DNA"/>
</dbReference>
<dbReference type="RefSeq" id="WP_011409338.1">
    <property type="nucleotide sequence ID" value="NC_007705.1"/>
</dbReference>
<dbReference type="SMR" id="Q2NZI6"/>
<dbReference type="KEGG" id="xom:XOO3536"/>
<dbReference type="HOGENOM" id="CLU_034646_11_0_6"/>
<dbReference type="GO" id="GO:0030288">
    <property type="term" value="C:outer membrane-bounded periplasmic space"/>
    <property type="evidence" value="ECO:0007669"/>
    <property type="project" value="InterPro"/>
</dbReference>
<dbReference type="GO" id="GO:0042277">
    <property type="term" value="F:peptide binding"/>
    <property type="evidence" value="ECO:0007669"/>
    <property type="project" value="InterPro"/>
</dbReference>
<dbReference type="GO" id="GO:0003755">
    <property type="term" value="F:peptidyl-prolyl cis-trans isomerase activity"/>
    <property type="evidence" value="ECO:0007669"/>
    <property type="project" value="UniProtKB-UniRule"/>
</dbReference>
<dbReference type="GO" id="GO:0051082">
    <property type="term" value="F:unfolded protein binding"/>
    <property type="evidence" value="ECO:0007669"/>
    <property type="project" value="UniProtKB-UniRule"/>
</dbReference>
<dbReference type="GO" id="GO:0043165">
    <property type="term" value="P:Gram-negative-bacterium-type cell outer membrane assembly"/>
    <property type="evidence" value="ECO:0007669"/>
    <property type="project" value="InterPro"/>
</dbReference>
<dbReference type="GO" id="GO:0006457">
    <property type="term" value="P:protein folding"/>
    <property type="evidence" value="ECO:0007669"/>
    <property type="project" value="UniProtKB-UniRule"/>
</dbReference>
<dbReference type="GO" id="GO:0050821">
    <property type="term" value="P:protein stabilization"/>
    <property type="evidence" value="ECO:0007669"/>
    <property type="project" value="InterPro"/>
</dbReference>
<dbReference type="Gene3D" id="3.10.50.40">
    <property type="match status" value="2"/>
</dbReference>
<dbReference type="Gene3D" id="1.10.4030.10">
    <property type="entry name" value="Porin chaperone SurA, peptide-binding domain"/>
    <property type="match status" value="1"/>
</dbReference>
<dbReference type="HAMAP" id="MF_01183">
    <property type="entry name" value="Chaperone_SurA"/>
    <property type="match status" value="1"/>
</dbReference>
<dbReference type="InterPro" id="IPR050280">
    <property type="entry name" value="OMP_Chaperone_SurA"/>
</dbReference>
<dbReference type="InterPro" id="IPR046357">
    <property type="entry name" value="PPIase_dom_sf"/>
</dbReference>
<dbReference type="InterPro" id="IPR000297">
    <property type="entry name" value="PPIase_PpiC"/>
</dbReference>
<dbReference type="InterPro" id="IPR023034">
    <property type="entry name" value="PPIase_SurA"/>
</dbReference>
<dbReference type="InterPro" id="IPR015391">
    <property type="entry name" value="SurA_N"/>
</dbReference>
<dbReference type="InterPro" id="IPR027304">
    <property type="entry name" value="Trigger_fact/SurA_dom_sf"/>
</dbReference>
<dbReference type="PANTHER" id="PTHR47637">
    <property type="entry name" value="CHAPERONE SURA"/>
    <property type="match status" value="1"/>
</dbReference>
<dbReference type="PANTHER" id="PTHR47637:SF1">
    <property type="entry name" value="CHAPERONE SURA"/>
    <property type="match status" value="1"/>
</dbReference>
<dbReference type="Pfam" id="PF00639">
    <property type="entry name" value="Rotamase"/>
    <property type="match status" value="1"/>
</dbReference>
<dbReference type="Pfam" id="PF13616">
    <property type="entry name" value="Rotamase_3"/>
    <property type="match status" value="1"/>
</dbReference>
<dbReference type="Pfam" id="PF09312">
    <property type="entry name" value="SurA_N"/>
    <property type="match status" value="1"/>
</dbReference>
<dbReference type="SUPFAM" id="SSF54534">
    <property type="entry name" value="FKBP-like"/>
    <property type="match status" value="2"/>
</dbReference>
<dbReference type="SUPFAM" id="SSF109998">
    <property type="entry name" value="Triger factor/SurA peptide-binding domain-like"/>
    <property type="match status" value="1"/>
</dbReference>
<dbReference type="PROSITE" id="PS50198">
    <property type="entry name" value="PPIC_PPIASE_2"/>
    <property type="match status" value="2"/>
</dbReference>
<proteinExistence type="inferred from homology"/>